<comment type="function">
    <text evidence="1 2">Acts as a component of the essential kinetochore-associated Ndc80 complex, which is required for chromosome segregation and spindle checkpoint activity during meiosis and mitosis. Required for kinetochore integrity and the organization of stable microtubule binding sites in the outer plate of the kinetochore. Participates in SAC signaling that responds specifically to disruptions in spindle microtubule dynamics. The NDC80 complex synergistically enhances the affinity of the SKA1 complex for microtubules and may allow the NDC80 complex to track depolymerizing microtubules.</text>
</comment>
<comment type="subunit">
    <text evidence="2">Component of the Ndc80 complex, which is composed of Ndc80, Nuf2 and Spc25.</text>
</comment>
<comment type="subcellular location">
    <subcellularLocation>
        <location evidence="2">Nucleus</location>
    </subcellularLocation>
    <subcellularLocation>
        <location evidence="2">Chromosome</location>
        <location evidence="2">Centromere</location>
        <location evidence="2">Kinetochore</location>
    </subcellularLocation>
</comment>
<comment type="similarity">
    <text evidence="3">Belongs to the SPC25 family.</text>
</comment>
<proteinExistence type="inferred from homology"/>
<sequence length="222" mass="25619">MAIIMAESSYERRVKALYEKQIRMEALEAKFIKKVYKFNSNLLDVKEAACRHQRKVGKLQKVLMERREELDKRVSFIEELDRELEATKLRDLAMKDRIKQQKMLARQRKNEIMESIHTLSKTTGTYINQDALPARVKGVTVLRGDKRNQLIPFDLKSTDVEGLDSLCQHLESLNVDMAQWQQLISLAMDVAMESRAPTTPPKEATNCNSIIEIDLTSPTCHI</sequence>
<reference evidence="4" key="1">
    <citation type="journal article" date="2007" name="J. Cell Sci.">
        <title>Mitch a rapidly evolving component of the Ndc80 kinetochore complex required for correct chromosome segregation in Drosophila.</title>
        <authorList>
            <person name="Williams B."/>
            <person name="Leung G."/>
            <person name="Maiato H."/>
            <person name="Wong A."/>
            <person name="Li Z."/>
            <person name="Williams E.V."/>
            <person name="Kirkpatrick C."/>
            <person name="Aquadro C.F."/>
            <person name="Rieder C.L."/>
            <person name="Goldberg M.L."/>
        </authorList>
    </citation>
    <scope>NUCLEOTIDE SEQUENCE [GENOMIC DNA]</scope>
</reference>
<name>SPC25_DROMA</name>
<protein>
    <recommendedName>
        <fullName evidence="2">Kinetochore protein Spc25</fullName>
    </recommendedName>
</protein>
<evidence type="ECO:0000250" key="1">
    <source>
        <dbReference type="UniProtKB" id="Q9HBM1"/>
    </source>
</evidence>
<evidence type="ECO:0000250" key="2">
    <source>
        <dbReference type="UniProtKB" id="Q9V3V7"/>
    </source>
</evidence>
<evidence type="ECO:0000255" key="3"/>
<evidence type="ECO:0000312" key="4">
    <source>
        <dbReference type="EMBL" id="AAU15001.1"/>
    </source>
</evidence>
<dbReference type="EMBL" id="AY714307">
    <property type="protein sequence ID" value="AAU15001.1"/>
    <property type="molecule type" value="Genomic_DNA"/>
</dbReference>
<dbReference type="SMR" id="Q64EW6"/>
<dbReference type="Proteomes" id="UP000515162">
    <property type="component" value="Unplaced"/>
</dbReference>
<dbReference type="GO" id="GO:0031262">
    <property type="term" value="C:Ndc80 complex"/>
    <property type="evidence" value="ECO:0000250"/>
    <property type="project" value="UniProtKB"/>
</dbReference>
<dbReference type="GO" id="GO:0005634">
    <property type="term" value="C:nucleus"/>
    <property type="evidence" value="ECO:0007669"/>
    <property type="project" value="UniProtKB-SubCell"/>
</dbReference>
<dbReference type="GO" id="GO:0051301">
    <property type="term" value="P:cell division"/>
    <property type="evidence" value="ECO:0007669"/>
    <property type="project" value="UniProtKB-KW"/>
</dbReference>
<dbReference type="GO" id="GO:0051311">
    <property type="term" value="P:meiotic metaphase chromosome alignment"/>
    <property type="evidence" value="ECO:0000250"/>
    <property type="project" value="UniProtKB"/>
</dbReference>
<dbReference type="GO" id="GO:0000212">
    <property type="term" value="P:meiotic spindle organization"/>
    <property type="evidence" value="ECO:0000250"/>
    <property type="project" value="UniProtKB"/>
</dbReference>
<dbReference type="GO" id="GO:0007080">
    <property type="term" value="P:mitotic metaphase chromosome alignment"/>
    <property type="evidence" value="ECO:0000250"/>
    <property type="project" value="UniProtKB"/>
</dbReference>
<accession>Q64EW6</accession>
<gene>
    <name evidence="2" type="primary">Spc25</name>
    <name evidence="4" type="synonym">mitch</name>
</gene>
<feature type="chain" id="PRO_0000392419" description="Kinetochore protein Spc25">
    <location>
        <begin position="1"/>
        <end position="222"/>
    </location>
</feature>
<feature type="coiled-coil region" evidence="3">
    <location>
        <begin position="51"/>
        <end position="86"/>
    </location>
</feature>
<keyword id="KW-0131">Cell cycle</keyword>
<keyword id="KW-0132">Cell division</keyword>
<keyword id="KW-0137">Centromere</keyword>
<keyword id="KW-0158">Chromosome</keyword>
<keyword id="KW-0175">Coiled coil</keyword>
<keyword id="KW-0995">Kinetochore</keyword>
<keyword id="KW-0469">Meiosis</keyword>
<keyword id="KW-0498">Mitosis</keyword>
<keyword id="KW-0539">Nucleus</keyword>
<organism>
    <name type="scientific">Drosophila mauritiana</name>
    <name type="common">Fruit fly</name>
    <dbReference type="NCBI Taxonomy" id="7226"/>
    <lineage>
        <taxon>Eukaryota</taxon>
        <taxon>Metazoa</taxon>
        <taxon>Ecdysozoa</taxon>
        <taxon>Arthropoda</taxon>
        <taxon>Hexapoda</taxon>
        <taxon>Insecta</taxon>
        <taxon>Pterygota</taxon>
        <taxon>Neoptera</taxon>
        <taxon>Endopterygota</taxon>
        <taxon>Diptera</taxon>
        <taxon>Brachycera</taxon>
        <taxon>Muscomorpha</taxon>
        <taxon>Ephydroidea</taxon>
        <taxon>Drosophilidae</taxon>
        <taxon>Drosophila</taxon>
        <taxon>Sophophora</taxon>
    </lineage>
</organism>